<evidence type="ECO:0000255" key="1"/>
<evidence type="ECO:0000255" key="2">
    <source>
        <dbReference type="HAMAP-Rule" id="MF_01138"/>
    </source>
</evidence>
<evidence type="ECO:0000269" key="3">
    <source>
    </source>
</evidence>
<evidence type="ECO:0000269" key="4">
    <source>
    </source>
</evidence>
<evidence type="ECO:0000305" key="5"/>
<protein>
    <recommendedName>
        <fullName>Acetyl-CoA decarbonylase/synthase complex subunit beta 1</fullName>
        <shortName>ACDS complex subunit beta 1</shortName>
        <ecNumber evidence="2">2.3.1.169</ecNumber>
    </recommendedName>
    <alternativeName>
        <fullName>ACDS complex acyltransferase 1</fullName>
    </alternativeName>
</protein>
<feature type="initiator methionine" description="Removed" evidence="4">
    <location>
        <position position="1"/>
    </location>
</feature>
<feature type="chain" id="PRO_0000155106" description="Acetyl-CoA decarbonylase/synthase complex subunit beta 1">
    <location>
        <begin position="2"/>
        <end position="469"/>
    </location>
</feature>
<feature type="binding site" evidence="1">
    <location>
        <position position="189"/>
    </location>
    <ligand>
        <name>[Ni-Fe-S] cluster</name>
        <dbReference type="ChEBI" id="CHEBI:60400"/>
    </ligand>
</feature>
<feature type="binding site" evidence="1">
    <location>
        <position position="192"/>
    </location>
    <ligand>
        <name>[Ni-Fe-S] cluster</name>
        <dbReference type="ChEBI" id="CHEBI:60400"/>
    </ligand>
</feature>
<feature type="binding site" evidence="1">
    <location>
        <position position="278"/>
    </location>
    <ligand>
        <name>[Ni-Fe-S] cluster</name>
        <dbReference type="ChEBI" id="CHEBI:60400"/>
    </ligand>
</feature>
<feature type="binding site" evidence="1">
    <location>
        <position position="280"/>
    </location>
    <ligand>
        <name>[Ni-Fe-S] cluster</name>
        <dbReference type="ChEBI" id="CHEBI:60400"/>
    </ligand>
</feature>
<accession>P72021</accession>
<proteinExistence type="evidence at protein level"/>
<dbReference type="EC" id="2.3.1.169" evidence="2"/>
<dbReference type="EMBL" id="U66032">
    <property type="protein sequence ID" value="AAC44652.1"/>
    <property type="molecule type" value="Genomic_DNA"/>
</dbReference>
<dbReference type="SMR" id="P72021"/>
<dbReference type="KEGG" id="ag:AAC44652"/>
<dbReference type="BioCyc" id="MetaCyc:CDHCMSARC-MONOMER"/>
<dbReference type="BRENDA" id="2.3.1.169">
    <property type="organism ID" value="3281"/>
</dbReference>
<dbReference type="UniPathway" id="UPA00642"/>
<dbReference type="GO" id="GO:0016407">
    <property type="term" value="F:acetyltransferase activity"/>
    <property type="evidence" value="ECO:0007669"/>
    <property type="project" value="UniProtKB-UniRule"/>
</dbReference>
<dbReference type="GO" id="GO:0043885">
    <property type="term" value="F:anaerobic carbon-monoxide dehydrogenase activity"/>
    <property type="evidence" value="ECO:0000314"/>
    <property type="project" value="MENGO"/>
</dbReference>
<dbReference type="GO" id="GO:0043884">
    <property type="term" value="F:CO-methylating acetyl-CoA synthase activity"/>
    <property type="evidence" value="ECO:0007669"/>
    <property type="project" value="UniProtKB-EC"/>
</dbReference>
<dbReference type="GO" id="GO:0005506">
    <property type="term" value="F:iron ion binding"/>
    <property type="evidence" value="ECO:0007669"/>
    <property type="project" value="UniProtKB-UniRule"/>
</dbReference>
<dbReference type="GO" id="GO:0051536">
    <property type="term" value="F:iron-sulfur cluster binding"/>
    <property type="evidence" value="ECO:0007669"/>
    <property type="project" value="UniProtKB-KW"/>
</dbReference>
<dbReference type="GO" id="GO:0016151">
    <property type="term" value="F:nickel cation binding"/>
    <property type="evidence" value="ECO:0007669"/>
    <property type="project" value="UniProtKB-UniRule"/>
</dbReference>
<dbReference type="GO" id="GO:0006084">
    <property type="term" value="P:acetyl-CoA metabolic process"/>
    <property type="evidence" value="ECO:0007669"/>
    <property type="project" value="InterPro"/>
</dbReference>
<dbReference type="GO" id="GO:0019385">
    <property type="term" value="P:methanogenesis, from acetate"/>
    <property type="evidence" value="ECO:0007669"/>
    <property type="project" value="UniProtKB-UniRule"/>
</dbReference>
<dbReference type="FunFam" id="3.40.970.20:FF:000001">
    <property type="entry name" value="Acetyl-CoA decarbonylase/synthase complex subunit beta"/>
    <property type="match status" value="1"/>
</dbReference>
<dbReference type="FunFam" id="3.40.1470.10:FF:000001">
    <property type="entry name" value="Acetyl-CoA decarbonylase/synthase complex subunit beta 1"/>
    <property type="match status" value="1"/>
</dbReference>
<dbReference type="FunFam" id="3.30.1650.10:FF:000001">
    <property type="entry name" value="Acetyl-CoA decarbonylase/synthase complex subunit beta 2"/>
    <property type="match status" value="1"/>
</dbReference>
<dbReference type="Gene3D" id="3.30.1650.10">
    <property type="entry name" value="Bifunctional carbon monoxide dehydrogenase/acetyl-coa synthase(codh/acs), Chain M, domain 3"/>
    <property type="match status" value="1"/>
</dbReference>
<dbReference type="Gene3D" id="3.40.1470.10">
    <property type="entry name" value="Bifunctional carbon monoxide dehydrogenase/acetyl-coa synthase(codh/acs), Chain M, domain 5"/>
    <property type="match status" value="1"/>
</dbReference>
<dbReference type="Gene3D" id="3.40.970.20">
    <property type="entry name" value="Carbon monoxide dehydrogenase alpha subunit. Chain D, domain 4"/>
    <property type="match status" value="1"/>
</dbReference>
<dbReference type="HAMAP" id="MF_01138">
    <property type="entry name" value="CdhC"/>
    <property type="match status" value="1"/>
</dbReference>
<dbReference type="InterPro" id="IPR045822">
    <property type="entry name" value="ACS_CODH_B_C"/>
</dbReference>
<dbReference type="InterPro" id="IPR004461">
    <property type="entry name" value="CO_DH/Ac-CoA_synth_bsu"/>
</dbReference>
<dbReference type="InterPro" id="IPR038571">
    <property type="entry name" value="CO_DH/Ac-CoA_synth_bsu_3_sf"/>
</dbReference>
<dbReference type="InterPro" id="IPR023432">
    <property type="entry name" value="CO_DH/Ac-CoA_synth_bsu_arc"/>
</dbReference>
<dbReference type="InterPro" id="IPR011254">
    <property type="entry name" value="Prismane-like_sf"/>
</dbReference>
<dbReference type="NCBIfam" id="TIGR00316">
    <property type="entry name" value="cdhC"/>
    <property type="match status" value="1"/>
</dbReference>
<dbReference type="NCBIfam" id="NF003379">
    <property type="entry name" value="PRK04456.1"/>
    <property type="match status" value="1"/>
</dbReference>
<dbReference type="PANTHER" id="PTHR42281">
    <property type="match status" value="1"/>
</dbReference>
<dbReference type="PANTHER" id="PTHR42281:SF1">
    <property type="entry name" value="ACETYL-COA DECARBONYLASE_SYNTHASE COMPLEX SUBUNIT BETA 1"/>
    <property type="match status" value="1"/>
</dbReference>
<dbReference type="Pfam" id="PF19436">
    <property type="entry name" value="ACS_CODH_B_C"/>
    <property type="match status" value="1"/>
</dbReference>
<dbReference type="Pfam" id="PF03598">
    <property type="entry name" value="CdhC"/>
    <property type="match status" value="1"/>
</dbReference>
<dbReference type="SUPFAM" id="SSF56821">
    <property type="entry name" value="Prismane protein-like"/>
    <property type="match status" value="1"/>
</dbReference>
<organism>
    <name type="scientific">Methanosarcina thermophila</name>
    <dbReference type="NCBI Taxonomy" id="2210"/>
    <lineage>
        <taxon>Archaea</taxon>
        <taxon>Methanobacteriati</taxon>
        <taxon>Methanobacteriota</taxon>
        <taxon>Stenosarchaea group</taxon>
        <taxon>Methanomicrobia</taxon>
        <taxon>Methanosarcinales</taxon>
        <taxon>Methanosarcinaceae</taxon>
        <taxon>Methanosarcina</taxon>
    </lineage>
</organism>
<name>ACDB1_METTE</name>
<keyword id="KW-0012">Acyltransferase</keyword>
<keyword id="KW-0903">Direct protein sequencing</keyword>
<keyword id="KW-0408">Iron</keyword>
<keyword id="KW-0411">Iron-sulfur</keyword>
<keyword id="KW-0479">Metal-binding</keyword>
<keyword id="KW-0484">Methanogenesis</keyword>
<keyword id="KW-0533">Nickel</keyword>
<keyword id="KW-0808">Transferase</keyword>
<sequence length="469" mass="51882">MAEFPFEISPMFEGERVRKEGMFVELGGPKSLGLELVRAADMDAIEDDKVTIVGPDLKDMEEGKTYPWAMIFNIGGELVEPDLESVVERRVHDFINYCQGIMHLNQRYDVWMRVSKDTAGKMDSFEPFGKAVMMLFKTELPFIEKMQVTFYTGKEEVEKQMELAKEIFKARDARTKDLHDEDVDVFYGCTLCQSFAPTNVCVVSPDRISLCGAINWFDGRAAAKVDPEGPQFEIAKGDLLDAVTGEYTGVNEIAKKLSSGEFDKIKLHSFFDSPHTSCGCFEVVGFYIPEVDGIGWVDREYQGMAPNGIGFSTMAGQTGGGKQIVGFLGIGVNYFYSPKFIQADGGWNRVVWLPSGLKAKIDEAIPADLKDKIATENDATDIASLKDFLEAKNHPVVATWAAAEEEEEEEEEEEEVAVAAAPMMMPAAGFQMPAMPMMSGGSGGGIKLTFKNAKITIDKLVISEKKEKK</sequence>
<comment type="function">
    <text evidence="2">Part of a complex that catalyzes the reversible cleavage of acetyl-CoA, allowing growth on acetate as sole source of carbon and energy. The alpha-epsilon complex generates CO from CO(2), while the beta subunit (this protein) combines the CO with CoA and a methyl group to form acetyl-CoA. The methyl group, which is incorporated into acetyl-CoA, is transferred to the beta subunit by a corrinoid iron-sulfur protein (the gamma-delta complex).</text>
</comment>
<comment type="catalytic activity">
    <reaction evidence="2">
        <text>Co(I)-[corrinoid Fe-S protein] + acetyl-CoA + H(+) = methyl-Co(III)-[corrinoid Fe-S protein] + CO + CoA</text>
        <dbReference type="Rhea" id="RHEA:45212"/>
        <dbReference type="Rhea" id="RHEA-COMP:11110"/>
        <dbReference type="Rhea" id="RHEA-COMP:11111"/>
        <dbReference type="ChEBI" id="CHEBI:15378"/>
        <dbReference type="ChEBI" id="CHEBI:17245"/>
        <dbReference type="ChEBI" id="CHEBI:57287"/>
        <dbReference type="ChEBI" id="CHEBI:57288"/>
        <dbReference type="ChEBI" id="CHEBI:85033"/>
        <dbReference type="ChEBI" id="CHEBI:85035"/>
        <dbReference type="EC" id="2.3.1.169"/>
    </reaction>
</comment>
<comment type="cofactor">
    <cofactor evidence="3">
        <name>[Ni-Fe-S] cluster</name>
        <dbReference type="ChEBI" id="CHEBI:60400"/>
    </cofactor>
    <text evidence="3">Binds 1 [Ni-Fe-S] cluster.</text>
</comment>
<comment type="pathway">
    <text>One-carbon metabolism; methanogenesis from acetate.</text>
</comment>
<comment type="subunit">
    <text evidence="5">Monomer. The ACDS complex is made up of alpha, epsilon, beta, gamma and delta chains with a probable stoichiometry of (alpha(2)epsilon(2))(4)-beta(8)-(gamma(1)delta(1))(8) (Potential).</text>
</comment>
<comment type="similarity">
    <text evidence="5">Belongs to the CdhC family.</text>
</comment>
<reference key="1">
    <citation type="journal article" date="1996" name="J. Bacteriol.">
        <title>Analysis of the CO dehydrogenase/acetyl-Coenzyme A synthase operon of Methanosarcina thermophila.</title>
        <authorList>
            <person name="Maupin-Furlow J.A."/>
            <person name="Ferry J.G."/>
        </authorList>
    </citation>
    <scope>NUCLEOTIDE SEQUENCE [GENOMIC DNA]</scope>
    <scope>PROTEIN SEQUENCE OF 2-26</scope>
    <source>
        <strain>ATCC 43570 / DSM 1825 / OCM 12 / TM-1</strain>
    </source>
</reference>
<reference key="2">
    <citation type="journal article" date="1993" name="J. Biol. Chem.">
        <title>Characterization of the metal centers of the corrinoid/iron-sulfur component of the CO dehydrogenase enzyme complex from Methanosarcina thermophila by EPR spectroscopy and spectroelectrochemistry.</title>
        <authorList>
            <person name="Jablonski P.E."/>
            <person name="Lu W.P."/>
            <person name="Ragsdale S.W."/>
            <person name="Ferry J.G."/>
        </authorList>
    </citation>
    <scope>COFACTOR</scope>
    <scope>EPR SPECTROSCOPY</scope>
</reference>
<gene>
    <name type="primary">cdhC1</name>
</gene>